<evidence type="ECO:0000255" key="1">
    <source>
        <dbReference type="HAMAP-Rule" id="MF_00141"/>
    </source>
</evidence>
<dbReference type="EMBL" id="CP000076">
    <property type="protein sequence ID" value="AAY93520.1"/>
    <property type="molecule type" value="Genomic_DNA"/>
</dbReference>
<dbReference type="RefSeq" id="WP_007931398.1">
    <property type="nucleotide sequence ID" value="NC_004129.6"/>
</dbReference>
<dbReference type="SMR" id="Q4K8S7"/>
<dbReference type="STRING" id="220664.PFL_4264"/>
<dbReference type="KEGG" id="pfl:PFL_4264"/>
<dbReference type="eggNOG" id="COG0231">
    <property type="taxonomic scope" value="Bacteria"/>
</dbReference>
<dbReference type="HOGENOM" id="CLU_074944_2_1_6"/>
<dbReference type="UniPathway" id="UPA00345"/>
<dbReference type="Proteomes" id="UP000008540">
    <property type="component" value="Chromosome"/>
</dbReference>
<dbReference type="GO" id="GO:0005737">
    <property type="term" value="C:cytoplasm"/>
    <property type="evidence" value="ECO:0007669"/>
    <property type="project" value="UniProtKB-SubCell"/>
</dbReference>
<dbReference type="GO" id="GO:0003746">
    <property type="term" value="F:translation elongation factor activity"/>
    <property type="evidence" value="ECO:0007669"/>
    <property type="project" value="UniProtKB-UniRule"/>
</dbReference>
<dbReference type="GO" id="GO:0043043">
    <property type="term" value="P:peptide biosynthetic process"/>
    <property type="evidence" value="ECO:0007669"/>
    <property type="project" value="InterPro"/>
</dbReference>
<dbReference type="CDD" id="cd04470">
    <property type="entry name" value="S1_EF-P_repeat_1"/>
    <property type="match status" value="1"/>
</dbReference>
<dbReference type="FunFam" id="2.30.30.30:FF:000003">
    <property type="entry name" value="Elongation factor P"/>
    <property type="match status" value="1"/>
</dbReference>
<dbReference type="FunFam" id="2.40.50.140:FF:000004">
    <property type="entry name" value="Elongation factor P"/>
    <property type="match status" value="1"/>
</dbReference>
<dbReference type="Gene3D" id="2.30.30.30">
    <property type="match status" value="1"/>
</dbReference>
<dbReference type="Gene3D" id="2.40.50.140">
    <property type="entry name" value="Nucleic acid-binding proteins"/>
    <property type="match status" value="2"/>
</dbReference>
<dbReference type="HAMAP" id="MF_00141">
    <property type="entry name" value="EF_P"/>
    <property type="match status" value="1"/>
</dbReference>
<dbReference type="InterPro" id="IPR015365">
    <property type="entry name" value="Elong-fact-P_C"/>
</dbReference>
<dbReference type="InterPro" id="IPR012340">
    <property type="entry name" value="NA-bd_OB-fold"/>
</dbReference>
<dbReference type="InterPro" id="IPR014722">
    <property type="entry name" value="Rib_uL2_dom2"/>
</dbReference>
<dbReference type="InterPro" id="IPR020599">
    <property type="entry name" value="Transl_elong_fac_P/YeiP"/>
</dbReference>
<dbReference type="InterPro" id="IPR013185">
    <property type="entry name" value="Transl_elong_KOW-like"/>
</dbReference>
<dbReference type="InterPro" id="IPR001059">
    <property type="entry name" value="Transl_elong_P/YeiP_cen"/>
</dbReference>
<dbReference type="InterPro" id="IPR011768">
    <property type="entry name" value="Transl_elongation_fac_P"/>
</dbReference>
<dbReference type="InterPro" id="IPR008991">
    <property type="entry name" value="Translation_prot_SH3-like_sf"/>
</dbReference>
<dbReference type="NCBIfam" id="NF001810">
    <property type="entry name" value="PRK00529.1"/>
    <property type="match status" value="1"/>
</dbReference>
<dbReference type="PANTHER" id="PTHR30053">
    <property type="entry name" value="ELONGATION FACTOR P"/>
    <property type="match status" value="1"/>
</dbReference>
<dbReference type="PANTHER" id="PTHR30053:SF12">
    <property type="entry name" value="ELONGATION FACTOR P (EF-P) FAMILY PROTEIN"/>
    <property type="match status" value="1"/>
</dbReference>
<dbReference type="Pfam" id="PF01132">
    <property type="entry name" value="EFP"/>
    <property type="match status" value="1"/>
</dbReference>
<dbReference type="Pfam" id="PF08207">
    <property type="entry name" value="EFP_N"/>
    <property type="match status" value="1"/>
</dbReference>
<dbReference type="Pfam" id="PF09285">
    <property type="entry name" value="Elong-fact-P_C"/>
    <property type="match status" value="1"/>
</dbReference>
<dbReference type="PIRSF" id="PIRSF005901">
    <property type="entry name" value="EF-P"/>
    <property type="match status" value="1"/>
</dbReference>
<dbReference type="SMART" id="SM01185">
    <property type="entry name" value="EFP"/>
    <property type="match status" value="1"/>
</dbReference>
<dbReference type="SMART" id="SM00841">
    <property type="entry name" value="Elong-fact-P_C"/>
    <property type="match status" value="1"/>
</dbReference>
<dbReference type="SUPFAM" id="SSF50249">
    <property type="entry name" value="Nucleic acid-binding proteins"/>
    <property type="match status" value="2"/>
</dbReference>
<dbReference type="SUPFAM" id="SSF50104">
    <property type="entry name" value="Translation proteins SH3-like domain"/>
    <property type="match status" value="1"/>
</dbReference>
<name>EFP_PSEF5</name>
<organism>
    <name type="scientific">Pseudomonas fluorescens (strain ATCC BAA-477 / NRRL B-23932 / Pf-5)</name>
    <dbReference type="NCBI Taxonomy" id="220664"/>
    <lineage>
        <taxon>Bacteria</taxon>
        <taxon>Pseudomonadati</taxon>
        <taxon>Pseudomonadota</taxon>
        <taxon>Gammaproteobacteria</taxon>
        <taxon>Pseudomonadales</taxon>
        <taxon>Pseudomonadaceae</taxon>
        <taxon>Pseudomonas</taxon>
    </lineage>
</organism>
<protein>
    <recommendedName>
        <fullName evidence="1">Elongation factor P</fullName>
        <shortName evidence="1">EF-P</shortName>
    </recommendedName>
</protein>
<comment type="function">
    <text evidence="1">Involved in peptide bond synthesis. Stimulates efficient translation and peptide-bond synthesis on native or reconstituted 70S ribosomes in vitro. Probably functions indirectly by altering the affinity of the ribosome for aminoacyl-tRNA, thus increasing their reactivity as acceptors for peptidyl transferase.</text>
</comment>
<comment type="pathway">
    <text evidence="1">Protein biosynthesis; polypeptide chain elongation.</text>
</comment>
<comment type="subcellular location">
    <subcellularLocation>
        <location evidence="1">Cytoplasm</location>
    </subcellularLocation>
</comment>
<comment type="similarity">
    <text evidence="1">Belongs to the elongation factor P family.</text>
</comment>
<gene>
    <name evidence="1" type="primary">efp</name>
    <name type="ordered locus">PFL_4264</name>
</gene>
<reference key="1">
    <citation type="journal article" date="2005" name="Nat. Biotechnol.">
        <title>Complete genome sequence of the plant commensal Pseudomonas fluorescens Pf-5.</title>
        <authorList>
            <person name="Paulsen I.T."/>
            <person name="Press C.M."/>
            <person name="Ravel J."/>
            <person name="Kobayashi D.Y."/>
            <person name="Myers G.S.A."/>
            <person name="Mavrodi D.V."/>
            <person name="DeBoy R.T."/>
            <person name="Seshadri R."/>
            <person name="Ren Q."/>
            <person name="Madupu R."/>
            <person name="Dodson R.J."/>
            <person name="Durkin A.S."/>
            <person name="Brinkac L.M."/>
            <person name="Daugherty S.C."/>
            <person name="Sullivan S.A."/>
            <person name="Rosovitz M.J."/>
            <person name="Gwinn M.L."/>
            <person name="Zhou L."/>
            <person name="Schneider D.J."/>
            <person name="Cartinhour S.W."/>
            <person name="Nelson W.C."/>
            <person name="Weidman J."/>
            <person name="Watkins K."/>
            <person name="Tran K."/>
            <person name="Khouri H."/>
            <person name="Pierson E.A."/>
            <person name="Pierson L.S. III"/>
            <person name="Thomashow L.S."/>
            <person name="Loper J.E."/>
        </authorList>
    </citation>
    <scope>NUCLEOTIDE SEQUENCE [LARGE SCALE GENOMIC DNA]</scope>
    <source>
        <strain>ATCC BAA-477 / NRRL B-23932 / Pf-5</strain>
    </source>
</reference>
<accession>Q4K8S7</accession>
<proteinExistence type="inferred from homology"/>
<sequence length="190" mass="21165">MKTGKELKPGTVIRIDNDPWLVQKAEFTKSGRNSAIMKTKLKNLLTGYKTETVYGADDKLDDVILDRKEATLSFISGDTYTFMDTTDYTMYELNAEDIEAVLPFIEEGMTDVCEAVFFEDRLVSVDLPTTIVRQVDYTEGSARGDTSGKVMKPAKLKNGTELSVADFIEIGDMIEIDTREGGSYKGRAKV</sequence>
<feature type="chain" id="PRO_1000010814" description="Elongation factor P">
    <location>
        <begin position="1"/>
        <end position="190"/>
    </location>
</feature>
<keyword id="KW-0963">Cytoplasm</keyword>
<keyword id="KW-0251">Elongation factor</keyword>
<keyword id="KW-0648">Protein biosynthesis</keyword>